<comment type="function">
    <text evidence="3">Catalyzes oxidation of L-threonate to 2-oxo-tetronate. Can use either NAD(+) or NADP(+) as cosubstrate, with a preference for NAD(+).</text>
</comment>
<comment type="catalytic activity">
    <reaction evidence="3">
        <text>L-threonate + NAD(+) = 2-dehydro-L-erythronate + NADH + H(+)</text>
        <dbReference type="Rhea" id="RHEA:52548"/>
        <dbReference type="ChEBI" id="CHEBI:15378"/>
        <dbReference type="ChEBI" id="CHEBI:57540"/>
        <dbReference type="ChEBI" id="CHEBI:57561"/>
        <dbReference type="ChEBI" id="CHEBI:57945"/>
        <dbReference type="ChEBI" id="CHEBI:136669"/>
        <dbReference type="EC" id="1.1.1.411"/>
    </reaction>
</comment>
<comment type="biophysicochemical properties">
    <kinetics>
        <KM evidence="3">0.35 mM for NAD(+)</KM>
        <KM evidence="3">0.3 mM for NADP(+)</KM>
        <text evidence="3">kcat is 29 sec(-1) with NAD(+) as cosubstrate. kcat is 2.2 sec(-1) with NADP(+) as cosubstrate.</text>
    </kinetics>
</comment>
<comment type="disruption phenotype">
    <text evidence="3">Deletion mutant is unable to use L-threonate as a carbon source.</text>
</comment>
<comment type="similarity">
    <text evidence="5">Belongs to the HIBADH-related family. L-threonate dehydrogenase subfamily.</text>
</comment>
<name>LTND_CUPNH</name>
<feature type="chain" id="PRO_0000439747" description="L-threonate dehydrogenase">
    <location>
        <begin position="1"/>
        <end position="297"/>
    </location>
</feature>
<feature type="active site" evidence="2">
    <location>
        <position position="173"/>
    </location>
</feature>
<feature type="binding site" evidence="1">
    <location>
        <begin position="3"/>
        <end position="31"/>
    </location>
    <ligand>
        <name>NAD(+)</name>
        <dbReference type="ChEBI" id="CHEBI:57540"/>
    </ligand>
</feature>
<feature type="binding site" evidence="1">
    <location>
        <position position="97"/>
    </location>
    <ligand>
        <name>NAD(+)</name>
        <dbReference type="ChEBI" id="CHEBI:57540"/>
    </ligand>
</feature>
<feature type="binding site" evidence="1">
    <location>
        <position position="241"/>
    </location>
    <ligand>
        <name>NAD(+)</name>
        <dbReference type="ChEBI" id="CHEBI:57540"/>
    </ligand>
</feature>
<reference key="1">
    <citation type="journal article" date="2006" name="Nat. Biotechnol.">
        <title>Genome sequence of the bioplastic-producing 'Knallgas' bacterium Ralstonia eutropha H16.</title>
        <authorList>
            <person name="Pohlmann A."/>
            <person name="Fricke W.F."/>
            <person name="Reinecke F."/>
            <person name="Kusian B."/>
            <person name="Liesegang H."/>
            <person name="Cramm R."/>
            <person name="Eitinger T."/>
            <person name="Ewering C."/>
            <person name="Poetter M."/>
            <person name="Schwartz E."/>
            <person name="Strittmatter A."/>
            <person name="Voss I."/>
            <person name="Gottschalk G."/>
            <person name="Steinbuechel A."/>
            <person name="Friedrich B."/>
            <person name="Bowien B."/>
        </authorList>
    </citation>
    <scope>NUCLEOTIDE SEQUENCE [LARGE SCALE GENOMIC DNA]</scope>
    <source>
        <strain>ATCC 17699 / DSM 428 / KCTC 22496 / NCIMB 10442 / H16 / Stanier 337</strain>
    </source>
</reference>
<reference key="2">
    <citation type="journal article" date="2016" name="Proc. Natl. Acad. Sci. U.S.A.">
        <title>Assignment of function to a domain of unknown function: DUF1537 is a new kinase family in catabolic pathways for acid sugars.</title>
        <authorList>
            <person name="Zhang X."/>
            <person name="Carter M.S."/>
            <person name="Vetting M.W."/>
            <person name="San Francisco B."/>
            <person name="Zhao S."/>
            <person name="Al-Obaidi N.F."/>
            <person name="Solbiati J.O."/>
            <person name="Thiaville J.J."/>
            <person name="de Crecy-Lagard V."/>
            <person name="Jacobson M.P."/>
            <person name="Almo S.C."/>
            <person name="Gerlt J.A."/>
        </authorList>
    </citation>
    <scope>FUNCTION</scope>
    <scope>CATALYTIC ACTIVITY</scope>
    <scope>BIOPHYSICOCHEMICAL PROPERTIES</scope>
    <scope>DISRUPTION PHENOTYPE</scope>
    <source>
        <strain>ATCC 17699 / DSM 428 / KCTC 22496 / NCIMB 10442 / H16 / Stanier 337</strain>
    </source>
</reference>
<dbReference type="EC" id="1.1.1.411" evidence="3"/>
<dbReference type="EMBL" id="AM260479">
    <property type="protein sequence ID" value="CAJ92694.1"/>
    <property type="molecule type" value="Genomic_DNA"/>
</dbReference>
<dbReference type="RefSeq" id="WP_011615152.1">
    <property type="nucleotide sequence ID" value="NC_008313.1"/>
</dbReference>
<dbReference type="SMR" id="Q0KBC7"/>
<dbReference type="STRING" id="381666.H16_A1562"/>
<dbReference type="KEGG" id="reh:H16_A1562"/>
<dbReference type="PATRIC" id="fig|381666.6.peg.1947"/>
<dbReference type="eggNOG" id="COG2084">
    <property type="taxonomic scope" value="Bacteria"/>
</dbReference>
<dbReference type="HOGENOM" id="CLU_035117_1_2_4"/>
<dbReference type="OrthoDB" id="9786703at2"/>
<dbReference type="BRENDA" id="1.1.1.411">
    <property type="organism ID" value="231"/>
</dbReference>
<dbReference type="Proteomes" id="UP000008210">
    <property type="component" value="Chromosome 1"/>
</dbReference>
<dbReference type="GO" id="GO:0051287">
    <property type="term" value="F:NAD binding"/>
    <property type="evidence" value="ECO:0007669"/>
    <property type="project" value="InterPro"/>
</dbReference>
<dbReference type="GO" id="GO:0050661">
    <property type="term" value="F:NADP binding"/>
    <property type="evidence" value="ECO:0007669"/>
    <property type="project" value="InterPro"/>
</dbReference>
<dbReference type="GO" id="GO:0016616">
    <property type="term" value="F:oxidoreductase activity, acting on the CH-OH group of donors, NAD or NADP as acceptor"/>
    <property type="evidence" value="ECO:0007669"/>
    <property type="project" value="InterPro"/>
</dbReference>
<dbReference type="GO" id="GO:0016054">
    <property type="term" value="P:organic acid catabolic process"/>
    <property type="evidence" value="ECO:0007669"/>
    <property type="project" value="UniProtKB-ARBA"/>
</dbReference>
<dbReference type="Gene3D" id="1.10.1040.10">
    <property type="entry name" value="N-(1-d-carboxylethyl)-l-norvaline Dehydrogenase, domain 2"/>
    <property type="match status" value="1"/>
</dbReference>
<dbReference type="Gene3D" id="3.40.50.720">
    <property type="entry name" value="NAD(P)-binding Rossmann-like Domain"/>
    <property type="match status" value="1"/>
</dbReference>
<dbReference type="InterPro" id="IPR008927">
    <property type="entry name" value="6-PGluconate_DH-like_C_sf"/>
</dbReference>
<dbReference type="InterPro" id="IPR013328">
    <property type="entry name" value="6PGD_dom2"/>
</dbReference>
<dbReference type="InterPro" id="IPR006115">
    <property type="entry name" value="6PGDH_NADP-bd"/>
</dbReference>
<dbReference type="InterPro" id="IPR029154">
    <property type="entry name" value="HIBADH-like_NADP-bd"/>
</dbReference>
<dbReference type="InterPro" id="IPR015815">
    <property type="entry name" value="HIBADH-related"/>
</dbReference>
<dbReference type="InterPro" id="IPR050006">
    <property type="entry name" value="LtnD"/>
</dbReference>
<dbReference type="InterPro" id="IPR036291">
    <property type="entry name" value="NAD(P)-bd_dom_sf"/>
</dbReference>
<dbReference type="NCBIfam" id="NF043037">
    <property type="entry name" value="ThreonDh"/>
    <property type="match status" value="1"/>
</dbReference>
<dbReference type="PANTHER" id="PTHR43060">
    <property type="entry name" value="3-HYDROXYISOBUTYRATE DEHYDROGENASE-LIKE 1, MITOCHONDRIAL-RELATED"/>
    <property type="match status" value="1"/>
</dbReference>
<dbReference type="PANTHER" id="PTHR43060:SF17">
    <property type="entry name" value="L-THREONATE DEHYDROGENASE"/>
    <property type="match status" value="1"/>
</dbReference>
<dbReference type="Pfam" id="PF14833">
    <property type="entry name" value="NAD_binding_11"/>
    <property type="match status" value="1"/>
</dbReference>
<dbReference type="Pfam" id="PF03446">
    <property type="entry name" value="NAD_binding_2"/>
    <property type="match status" value="1"/>
</dbReference>
<dbReference type="PIRSF" id="PIRSF000103">
    <property type="entry name" value="HIBADH"/>
    <property type="match status" value="1"/>
</dbReference>
<dbReference type="SUPFAM" id="SSF48179">
    <property type="entry name" value="6-phosphogluconate dehydrogenase C-terminal domain-like"/>
    <property type="match status" value="1"/>
</dbReference>
<dbReference type="SUPFAM" id="SSF51735">
    <property type="entry name" value="NAD(P)-binding Rossmann-fold domains"/>
    <property type="match status" value="1"/>
</dbReference>
<accession>Q0KBC7</accession>
<gene>
    <name evidence="4" type="primary">ltnD</name>
    <name evidence="6" type="ordered locus">H16_A1562</name>
</gene>
<keyword id="KW-0119">Carbohydrate metabolism</keyword>
<keyword id="KW-0520">NAD</keyword>
<keyword id="KW-0521">NADP</keyword>
<keyword id="KW-0560">Oxidoreductase</keyword>
<keyword id="KW-1185">Reference proteome</keyword>
<sequence length="297" mass="30439">MSRNIGVIGLGAMGFGVAQSLLRAGFNVHACDLRPEVLQRFADAGGVPCASPAELGSRCDVVLTLVVNAQQTEAVLFGANGAAAAMQPGKLVIASATVPPGFAEALGRRLAEQGLLMLDAPVSGGAARAASGEMTMMTSGPAEAYSLAEDVLAAIAGKVYRLGAAHGAGSKVKIINQLLAGVHIAAAAEAMALGLREGVDPDALYDVITHSAGNSWMFENRVPHILKGDYTPLSAVDIFVKDLGMVLDTARHSKFPLPLSAAAHQMFMMASTAGHGGEDDSAVIKIFPGIELPGKAE</sequence>
<evidence type="ECO:0000250" key="1">
    <source>
        <dbReference type="UniProtKB" id="P31937"/>
    </source>
</evidence>
<evidence type="ECO:0000250" key="2">
    <source>
        <dbReference type="UniProtKB" id="Q9I5I6"/>
    </source>
</evidence>
<evidence type="ECO:0000269" key="3">
    <source>
    </source>
</evidence>
<evidence type="ECO:0000303" key="4">
    <source>
    </source>
</evidence>
<evidence type="ECO:0000305" key="5"/>
<evidence type="ECO:0000312" key="6">
    <source>
        <dbReference type="EMBL" id="CAJ92694.1"/>
    </source>
</evidence>
<organism>
    <name type="scientific">Cupriavidus necator (strain ATCC 17699 / DSM 428 / KCTC 22496 / NCIMB 10442 / H16 / Stanier 337)</name>
    <name type="common">Ralstonia eutropha</name>
    <dbReference type="NCBI Taxonomy" id="381666"/>
    <lineage>
        <taxon>Bacteria</taxon>
        <taxon>Pseudomonadati</taxon>
        <taxon>Pseudomonadota</taxon>
        <taxon>Betaproteobacteria</taxon>
        <taxon>Burkholderiales</taxon>
        <taxon>Burkholderiaceae</taxon>
        <taxon>Cupriavidus</taxon>
    </lineage>
</organism>
<proteinExistence type="evidence at protein level"/>
<protein>
    <recommendedName>
        <fullName evidence="4">L-threonate dehydrogenase</fullName>
        <ecNumber evidence="3">1.1.1.411</ecNumber>
    </recommendedName>
</protein>